<protein>
    <recommendedName>
        <fullName>Cytochrome b</fullName>
    </recommendedName>
    <alternativeName>
        <fullName>Complex III subunit 3</fullName>
    </alternativeName>
    <alternativeName>
        <fullName>Complex III subunit III</fullName>
    </alternativeName>
    <alternativeName>
        <fullName>Cytochrome b-c1 complex subunit 3</fullName>
    </alternativeName>
    <alternativeName>
        <fullName>Ubiquinol-cytochrome-c reductase complex cytochrome b subunit</fullName>
    </alternativeName>
</protein>
<accession>O20546</accession>
<evidence type="ECO:0000250" key="1"/>
<evidence type="ECO:0000250" key="2">
    <source>
        <dbReference type="UniProtKB" id="P00157"/>
    </source>
</evidence>
<evidence type="ECO:0000255" key="3">
    <source>
        <dbReference type="PROSITE-ProRule" id="PRU00967"/>
    </source>
</evidence>
<evidence type="ECO:0000255" key="4">
    <source>
        <dbReference type="PROSITE-ProRule" id="PRU00968"/>
    </source>
</evidence>
<name>CYB_TYMBA</name>
<keyword id="KW-0249">Electron transport</keyword>
<keyword id="KW-0349">Heme</keyword>
<keyword id="KW-0408">Iron</keyword>
<keyword id="KW-0472">Membrane</keyword>
<keyword id="KW-0479">Metal-binding</keyword>
<keyword id="KW-0496">Mitochondrion</keyword>
<keyword id="KW-0999">Mitochondrion inner membrane</keyword>
<keyword id="KW-0679">Respiratory chain</keyword>
<keyword id="KW-0812">Transmembrane</keyword>
<keyword id="KW-1133">Transmembrane helix</keyword>
<keyword id="KW-0813">Transport</keyword>
<keyword id="KW-0830">Ubiquinone</keyword>
<feature type="chain" id="PRO_0000061694" description="Cytochrome b">
    <location>
        <begin position="1"/>
        <end position="379"/>
    </location>
</feature>
<feature type="transmembrane region" description="Helical" evidence="2">
    <location>
        <begin position="33"/>
        <end position="53"/>
    </location>
</feature>
<feature type="transmembrane region" description="Helical" evidence="2">
    <location>
        <begin position="77"/>
        <end position="98"/>
    </location>
</feature>
<feature type="transmembrane region" description="Helical" evidence="2">
    <location>
        <begin position="113"/>
        <end position="133"/>
    </location>
</feature>
<feature type="transmembrane region" description="Helical" evidence="2">
    <location>
        <begin position="178"/>
        <end position="198"/>
    </location>
</feature>
<feature type="transmembrane region" description="Helical" evidence="2">
    <location>
        <begin position="226"/>
        <end position="246"/>
    </location>
</feature>
<feature type="transmembrane region" description="Helical" evidence="2">
    <location>
        <begin position="288"/>
        <end position="308"/>
    </location>
</feature>
<feature type="transmembrane region" description="Helical" evidence="2">
    <location>
        <begin position="320"/>
        <end position="340"/>
    </location>
</feature>
<feature type="transmembrane region" description="Helical" evidence="2">
    <location>
        <begin position="347"/>
        <end position="367"/>
    </location>
</feature>
<feature type="binding site" description="axial binding residue" evidence="2">
    <location>
        <position position="83"/>
    </location>
    <ligand>
        <name>heme b</name>
        <dbReference type="ChEBI" id="CHEBI:60344"/>
        <label>b562</label>
    </ligand>
    <ligandPart>
        <name>Fe</name>
        <dbReference type="ChEBI" id="CHEBI:18248"/>
    </ligandPart>
</feature>
<feature type="binding site" description="axial binding residue" evidence="2">
    <location>
        <position position="97"/>
    </location>
    <ligand>
        <name>heme b</name>
        <dbReference type="ChEBI" id="CHEBI:60344"/>
        <label>b566</label>
    </ligand>
    <ligandPart>
        <name>Fe</name>
        <dbReference type="ChEBI" id="CHEBI:18248"/>
    </ligandPart>
</feature>
<feature type="binding site" description="axial binding residue" evidence="2">
    <location>
        <position position="182"/>
    </location>
    <ligand>
        <name>heme b</name>
        <dbReference type="ChEBI" id="CHEBI:60344"/>
        <label>b562</label>
    </ligand>
    <ligandPart>
        <name>Fe</name>
        <dbReference type="ChEBI" id="CHEBI:18248"/>
    </ligandPart>
</feature>
<feature type="binding site" description="axial binding residue" evidence="2">
    <location>
        <position position="196"/>
    </location>
    <ligand>
        <name>heme b</name>
        <dbReference type="ChEBI" id="CHEBI:60344"/>
        <label>b566</label>
    </ligand>
    <ligandPart>
        <name>Fe</name>
        <dbReference type="ChEBI" id="CHEBI:18248"/>
    </ligandPart>
</feature>
<feature type="binding site" evidence="2">
    <location>
        <position position="201"/>
    </location>
    <ligand>
        <name>a ubiquinone</name>
        <dbReference type="ChEBI" id="CHEBI:16389"/>
    </ligand>
</feature>
<gene>
    <name type="primary">MT-CYB</name>
    <name type="synonym">COB</name>
    <name type="synonym">CYTB</name>
    <name type="synonym">MTCYB</name>
</gene>
<organism>
    <name type="scientific">Tympanoctomys barrerae</name>
    <name type="common">Plains viscacha rat</name>
    <dbReference type="NCBI Taxonomy" id="61882"/>
    <lineage>
        <taxon>Eukaryota</taxon>
        <taxon>Metazoa</taxon>
        <taxon>Chordata</taxon>
        <taxon>Craniata</taxon>
        <taxon>Vertebrata</taxon>
        <taxon>Euteleostomi</taxon>
        <taxon>Mammalia</taxon>
        <taxon>Eutheria</taxon>
        <taxon>Euarchontoglires</taxon>
        <taxon>Glires</taxon>
        <taxon>Rodentia</taxon>
        <taxon>Hystricomorpha</taxon>
        <taxon>Octodontidae</taxon>
        <taxon>Tympanoctomys</taxon>
    </lineage>
</organism>
<sequence length="379" mass="42941">MTNLRKSHPLIKIINHSFIDLPAPSNISAWWNFGSLLGVCLMLQIITGLFLAMHYTADTTTAFSSVTHICRDVNYGWLIRYLHANGASMFFIFLYLHIGRGIYYGSFTFMETWNIGVLLLFAVMATAFMGYVLPWGQMSFWGATVITNLLSAIPYIGPTLVEWIWGGFSVDKATLTRFFAFHFILPFIITAMVMIHLLFLHETGSNNPSGLNSDSDKIPFHPYYTIKDILGLLFMILTLMTLVLFSPDLLGDPDNYTPANPLNTPPHIKPEWYFLFAYAILRSIPNKLGGVLALVFSILILMLFPALHLSKQRSMTFRPLSQCLLWILVANLIILTWIGGQPVEYPFITIGQLASVIYFSIILIFMPATSLMENKLLKW</sequence>
<dbReference type="EMBL" id="AF007060">
    <property type="protein sequence ID" value="AAB69219.1"/>
    <property type="molecule type" value="Genomic_DNA"/>
</dbReference>
<dbReference type="SMR" id="O20546"/>
<dbReference type="GO" id="GO:0005743">
    <property type="term" value="C:mitochondrial inner membrane"/>
    <property type="evidence" value="ECO:0007669"/>
    <property type="project" value="UniProtKB-SubCell"/>
</dbReference>
<dbReference type="GO" id="GO:0045275">
    <property type="term" value="C:respiratory chain complex III"/>
    <property type="evidence" value="ECO:0007669"/>
    <property type="project" value="InterPro"/>
</dbReference>
<dbReference type="GO" id="GO:0046872">
    <property type="term" value="F:metal ion binding"/>
    <property type="evidence" value="ECO:0007669"/>
    <property type="project" value="UniProtKB-KW"/>
</dbReference>
<dbReference type="GO" id="GO:0008121">
    <property type="term" value="F:ubiquinol-cytochrome-c reductase activity"/>
    <property type="evidence" value="ECO:0007669"/>
    <property type="project" value="InterPro"/>
</dbReference>
<dbReference type="GO" id="GO:0006122">
    <property type="term" value="P:mitochondrial electron transport, ubiquinol to cytochrome c"/>
    <property type="evidence" value="ECO:0007669"/>
    <property type="project" value="TreeGrafter"/>
</dbReference>
<dbReference type="CDD" id="cd00290">
    <property type="entry name" value="cytochrome_b_C"/>
    <property type="match status" value="1"/>
</dbReference>
<dbReference type="CDD" id="cd00284">
    <property type="entry name" value="Cytochrome_b_N"/>
    <property type="match status" value="1"/>
</dbReference>
<dbReference type="FunFam" id="1.20.810.10:FF:000002">
    <property type="entry name" value="Cytochrome b"/>
    <property type="match status" value="1"/>
</dbReference>
<dbReference type="Gene3D" id="1.20.810.10">
    <property type="entry name" value="Cytochrome Bc1 Complex, Chain C"/>
    <property type="match status" value="1"/>
</dbReference>
<dbReference type="InterPro" id="IPR005798">
    <property type="entry name" value="Cyt_b/b6_C"/>
</dbReference>
<dbReference type="InterPro" id="IPR036150">
    <property type="entry name" value="Cyt_b/b6_C_sf"/>
</dbReference>
<dbReference type="InterPro" id="IPR005797">
    <property type="entry name" value="Cyt_b/b6_N"/>
</dbReference>
<dbReference type="InterPro" id="IPR027387">
    <property type="entry name" value="Cytb/b6-like_sf"/>
</dbReference>
<dbReference type="InterPro" id="IPR030689">
    <property type="entry name" value="Cytochrome_b"/>
</dbReference>
<dbReference type="InterPro" id="IPR048260">
    <property type="entry name" value="Cytochrome_b_C_euk/bac"/>
</dbReference>
<dbReference type="InterPro" id="IPR048259">
    <property type="entry name" value="Cytochrome_b_N_euk/bac"/>
</dbReference>
<dbReference type="InterPro" id="IPR016174">
    <property type="entry name" value="Di-haem_cyt_TM"/>
</dbReference>
<dbReference type="PANTHER" id="PTHR19271">
    <property type="entry name" value="CYTOCHROME B"/>
    <property type="match status" value="1"/>
</dbReference>
<dbReference type="PANTHER" id="PTHR19271:SF16">
    <property type="entry name" value="CYTOCHROME B"/>
    <property type="match status" value="1"/>
</dbReference>
<dbReference type="Pfam" id="PF00032">
    <property type="entry name" value="Cytochrom_B_C"/>
    <property type="match status" value="1"/>
</dbReference>
<dbReference type="Pfam" id="PF00033">
    <property type="entry name" value="Cytochrome_B"/>
    <property type="match status" value="1"/>
</dbReference>
<dbReference type="PIRSF" id="PIRSF038885">
    <property type="entry name" value="COB"/>
    <property type="match status" value="1"/>
</dbReference>
<dbReference type="SUPFAM" id="SSF81648">
    <property type="entry name" value="a domain/subunit of cytochrome bc1 complex (Ubiquinol-cytochrome c reductase)"/>
    <property type="match status" value="1"/>
</dbReference>
<dbReference type="SUPFAM" id="SSF81342">
    <property type="entry name" value="Transmembrane di-heme cytochromes"/>
    <property type="match status" value="1"/>
</dbReference>
<dbReference type="PROSITE" id="PS51003">
    <property type="entry name" value="CYTB_CTER"/>
    <property type="match status" value="1"/>
</dbReference>
<dbReference type="PROSITE" id="PS51002">
    <property type="entry name" value="CYTB_NTER"/>
    <property type="match status" value="1"/>
</dbReference>
<proteinExistence type="inferred from homology"/>
<comment type="function">
    <text evidence="2">Component of the ubiquinol-cytochrome c reductase complex (complex III or cytochrome b-c1 complex) that is part of the mitochondrial respiratory chain. The b-c1 complex mediates electron transfer from ubiquinol to cytochrome c. Contributes to the generation of a proton gradient across the mitochondrial membrane that is then used for ATP synthesis.</text>
</comment>
<comment type="cofactor">
    <cofactor evidence="2">
        <name>heme b</name>
        <dbReference type="ChEBI" id="CHEBI:60344"/>
    </cofactor>
    <text evidence="2">Binds 2 heme b groups non-covalently.</text>
</comment>
<comment type="subunit">
    <text evidence="2">The cytochrome bc1 complex contains 11 subunits: 3 respiratory subunits (MT-CYB, CYC1 and UQCRFS1), 2 core proteins (UQCRC1 and UQCRC2) and 6 low-molecular weight proteins (UQCRH/QCR6, UQCRB/QCR7, UQCRQ/QCR8, UQCR10/QCR9, UQCR11/QCR10 and a cleavage product of UQCRFS1). This cytochrome bc1 complex then forms a dimer.</text>
</comment>
<comment type="subcellular location">
    <subcellularLocation>
        <location evidence="2">Mitochondrion inner membrane</location>
        <topology evidence="2">Multi-pass membrane protein</topology>
    </subcellularLocation>
</comment>
<comment type="miscellaneous">
    <text evidence="1">Heme 1 (or BL or b562) is low-potential and absorbs at about 562 nm, and heme 2 (or BH or b566) is high-potential and absorbs at about 566 nm.</text>
</comment>
<comment type="similarity">
    <text evidence="3 4">Belongs to the cytochrome b family.</text>
</comment>
<comment type="caution">
    <text evidence="2">The full-length protein contains only eight transmembrane helices, not nine as predicted by bioinformatics tools.</text>
</comment>
<reference key="1">
    <citation type="journal article" date="1998" name="Mol. Phylogenet. Evol.">
        <title>The molecular phylogenetics of tuco-tucos (genus Ctenomys, Rodentia: Octodontidae) suggests an early burst of speciation.</title>
        <authorList>
            <person name="Lessa E.P."/>
            <person name="Cook J.A."/>
        </authorList>
    </citation>
    <scope>NUCLEOTIDE SEQUENCE [GENOMIC DNA]</scope>
</reference>
<geneLocation type="mitochondrion"/>